<keyword id="KW-0966">Cell projection</keyword>
<keyword id="KW-0472">Membrane</keyword>
<keyword id="KW-0597">Phosphoprotein</keyword>
<keyword id="KW-1185">Reference proteome</keyword>
<keyword id="KW-0812">Transmembrane</keyword>
<keyword id="KW-1133">Transmembrane helix</keyword>
<gene>
    <name type="primary">Kiaa1549</name>
</gene>
<feature type="chain" id="PRO_0000342406" description="UPF0606 protein KIAA1549">
    <location>
        <begin position="1"/>
        <end position="1940"/>
    </location>
</feature>
<feature type="transmembrane region" description="Helical" evidence="2">
    <location>
        <begin position="988"/>
        <end position="1008"/>
    </location>
</feature>
<feature type="transmembrane region" description="Helical" evidence="2">
    <location>
        <begin position="1288"/>
        <end position="1308"/>
    </location>
</feature>
<feature type="region of interest" description="Disordered" evidence="3">
    <location>
        <begin position="788"/>
        <end position="917"/>
    </location>
</feature>
<feature type="region of interest" description="Disordered" evidence="3">
    <location>
        <begin position="1362"/>
        <end position="1451"/>
    </location>
</feature>
<feature type="region of interest" description="Disordered" evidence="3">
    <location>
        <begin position="1579"/>
        <end position="1599"/>
    </location>
</feature>
<feature type="region of interest" description="Disordered" evidence="3">
    <location>
        <begin position="1695"/>
        <end position="1782"/>
    </location>
</feature>
<feature type="region of interest" description="Disordered" evidence="3">
    <location>
        <begin position="1863"/>
        <end position="1915"/>
    </location>
</feature>
<feature type="compositionally biased region" description="Polar residues" evidence="3">
    <location>
        <begin position="788"/>
        <end position="797"/>
    </location>
</feature>
<feature type="compositionally biased region" description="Low complexity" evidence="3">
    <location>
        <begin position="808"/>
        <end position="840"/>
    </location>
</feature>
<feature type="compositionally biased region" description="Low complexity" evidence="3">
    <location>
        <begin position="860"/>
        <end position="877"/>
    </location>
</feature>
<feature type="compositionally biased region" description="Polar residues" evidence="3">
    <location>
        <begin position="878"/>
        <end position="903"/>
    </location>
</feature>
<feature type="compositionally biased region" description="Low complexity" evidence="3">
    <location>
        <begin position="1421"/>
        <end position="1435"/>
    </location>
</feature>
<feature type="compositionally biased region" description="Basic residues" evidence="3">
    <location>
        <begin position="1581"/>
        <end position="1595"/>
    </location>
</feature>
<feature type="compositionally biased region" description="Polar residues" evidence="3">
    <location>
        <begin position="1722"/>
        <end position="1737"/>
    </location>
</feature>
<feature type="compositionally biased region" description="Low complexity" evidence="3">
    <location>
        <begin position="1759"/>
        <end position="1769"/>
    </location>
</feature>
<feature type="compositionally biased region" description="Polar residues" evidence="3">
    <location>
        <begin position="1901"/>
        <end position="1915"/>
    </location>
</feature>
<feature type="modified residue" description="Phosphoserine" evidence="6">
    <location>
        <position position="1377"/>
    </location>
</feature>
<feature type="modified residue" description="Phosphoserine" evidence="6">
    <location>
        <position position="1384"/>
    </location>
</feature>
<feature type="modified residue" description="Phosphoserine" evidence="6">
    <location>
        <position position="1543"/>
    </location>
</feature>
<feature type="modified residue" description="Phosphoserine" evidence="6">
    <location>
        <position position="1544"/>
    </location>
</feature>
<feature type="modified residue" description="Phosphothreonine" evidence="6">
    <location>
        <position position="1611"/>
    </location>
</feature>
<feature type="modified residue" description="Phosphoserine" evidence="6">
    <location>
        <position position="1613"/>
    </location>
</feature>
<proteinExistence type="evidence at protein level"/>
<comment type="function">
    <text evidence="1">May play a role in photoreceptor function.</text>
</comment>
<comment type="subcellular location">
    <subcellularLocation>
        <location evidence="5">Membrane</location>
        <topology evidence="5">Multi-pass membrane protein</topology>
    </subcellularLocation>
    <subcellularLocation>
        <location evidence="4">Cell projection</location>
        <location evidence="4">Cilium</location>
    </subcellularLocation>
    <text evidence="4">In the retinal photoreceptor cells, localizes at the connecting cilium, a thin bridge linking the cell body and the light-sensing outer segment.</text>
</comment>
<comment type="tissue specificity">
    <text evidence="4">Expressed in retina photoreceptor cells (at protein level).</text>
</comment>
<comment type="PTM">
    <text evidence="1">O-glycosylated. O-mannosylated by POMT1 and POMT2 and elongated by POMGNT1.</text>
</comment>
<comment type="similarity">
    <text evidence="5">Belongs to the UPF0606 family.</text>
</comment>
<comment type="sequence caution" evidence="5">
    <conflict type="miscellaneous discrepancy">
        <sequence resource="EMBL-CDS" id="BAC98200"/>
    </conflict>
    <text>Probable cloning artifact.</text>
</comment>
<name>K1549_MOUSE</name>
<evidence type="ECO:0000250" key="1">
    <source>
        <dbReference type="UniProtKB" id="Q9HCM3"/>
    </source>
</evidence>
<evidence type="ECO:0000255" key="2"/>
<evidence type="ECO:0000256" key="3">
    <source>
        <dbReference type="SAM" id="MobiDB-lite"/>
    </source>
</evidence>
<evidence type="ECO:0000269" key="4">
    <source>
    </source>
</evidence>
<evidence type="ECO:0000305" key="5"/>
<evidence type="ECO:0007744" key="6">
    <source>
    </source>
</evidence>
<accession>Q68FD9</accession>
<accession>Q6ZPN1</accession>
<organism>
    <name type="scientific">Mus musculus</name>
    <name type="common">Mouse</name>
    <dbReference type="NCBI Taxonomy" id="10090"/>
    <lineage>
        <taxon>Eukaryota</taxon>
        <taxon>Metazoa</taxon>
        <taxon>Chordata</taxon>
        <taxon>Craniata</taxon>
        <taxon>Vertebrata</taxon>
        <taxon>Euteleostomi</taxon>
        <taxon>Mammalia</taxon>
        <taxon>Eutheria</taxon>
        <taxon>Euarchontoglires</taxon>
        <taxon>Glires</taxon>
        <taxon>Rodentia</taxon>
        <taxon>Myomorpha</taxon>
        <taxon>Muroidea</taxon>
        <taxon>Muridae</taxon>
        <taxon>Murinae</taxon>
        <taxon>Mus</taxon>
        <taxon>Mus</taxon>
    </lineage>
</organism>
<dbReference type="EMBL" id="AC125530">
    <property type="status" value="NOT_ANNOTATED_CDS"/>
    <property type="molecule type" value="Genomic_DNA"/>
</dbReference>
<dbReference type="EMBL" id="AC157667">
    <property type="status" value="NOT_ANNOTATED_CDS"/>
    <property type="molecule type" value="Genomic_DNA"/>
</dbReference>
<dbReference type="EMBL" id="BC079889">
    <property type="protein sequence ID" value="AAH79889.1"/>
    <property type="molecule type" value="mRNA"/>
</dbReference>
<dbReference type="EMBL" id="AK129390">
    <property type="protein sequence ID" value="BAC98200.1"/>
    <property type="status" value="ALT_SEQ"/>
    <property type="molecule type" value="mRNA"/>
</dbReference>
<dbReference type="CCDS" id="CCDS51749.1"/>
<dbReference type="RefSeq" id="NP_918950.2">
    <property type="nucleotide sequence ID" value="NM_194061.2"/>
</dbReference>
<dbReference type="BioGRID" id="236936">
    <property type="interactions" value="7"/>
</dbReference>
<dbReference type="FunCoup" id="Q68FD9">
    <property type="interactions" value="266"/>
</dbReference>
<dbReference type="IntAct" id="Q68FD9">
    <property type="interactions" value="1"/>
</dbReference>
<dbReference type="MINT" id="Q68FD9"/>
<dbReference type="STRING" id="10090.ENSMUSP00000130121"/>
<dbReference type="GlyConnect" id="2814">
    <property type="glycosylation" value="1 N-Linked glycan (2 sites)"/>
</dbReference>
<dbReference type="GlyCosmos" id="Q68FD9">
    <property type="glycosylation" value="2 sites, 1 glycan"/>
</dbReference>
<dbReference type="GlyGen" id="Q68FD9">
    <property type="glycosylation" value="11 sites, 5 N-linked glycans (5 sites), 1 O-linked glycan (2 sites)"/>
</dbReference>
<dbReference type="iPTMnet" id="Q68FD9"/>
<dbReference type="PhosphoSitePlus" id="Q68FD9"/>
<dbReference type="SwissPalm" id="Q68FD9"/>
<dbReference type="jPOST" id="Q68FD9"/>
<dbReference type="PaxDb" id="10090-ENSMUSP00000130121"/>
<dbReference type="ProteomicsDB" id="269131"/>
<dbReference type="Pumba" id="Q68FD9"/>
<dbReference type="Antibodypedia" id="9863">
    <property type="antibodies" value="24 antibodies from 11 providers"/>
</dbReference>
<dbReference type="Ensembl" id="ENSMUST00000169256.5">
    <property type="protein sequence ID" value="ENSMUSP00000130121.2"/>
    <property type="gene ID" value="ENSMUSG00000063455.17"/>
</dbReference>
<dbReference type="GeneID" id="330286"/>
<dbReference type="KEGG" id="mmu:330286"/>
<dbReference type="UCSC" id="uc009bjt.2">
    <property type="organism name" value="mouse"/>
</dbReference>
<dbReference type="AGR" id="MGI:2669829"/>
<dbReference type="MGI" id="MGI:2669829">
    <property type="gene designation" value="D630045J12Rik"/>
</dbReference>
<dbReference type="VEuPathDB" id="HostDB:ENSMUSG00000063455"/>
<dbReference type="eggNOG" id="ENOG502QT4E">
    <property type="taxonomic scope" value="Eukaryota"/>
</dbReference>
<dbReference type="GeneTree" id="ENSGT00530000063472"/>
<dbReference type="InParanoid" id="Q68FD9"/>
<dbReference type="OMA" id="YTWCASC"/>
<dbReference type="OrthoDB" id="10064192at2759"/>
<dbReference type="PhylomeDB" id="Q68FD9"/>
<dbReference type="TreeFam" id="TF332690"/>
<dbReference type="BioGRID-ORCS" id="330286">
    <property type="hits" value="1 hit in 79 CRISPR screens"/>
</dbReference>
<dbReference type="ChiTaRS" id="D630045J12Rik">
    <property type="organism name" value="mouse"/>
</dbReference>
<dbReference type="PRO" id="PR:Q68FD9"/>
<dbReference type="Proteomes" id="UP000000589">
    <property type="component" value="Chromosome 6"/>
</dbReference>
<dbReference type="RNAct" id="Q68FD9">
    <property type="molecule type" value="protein"/>
</dbReference>
<dbReference type="Bgee" id="ENSMUSG00000063455">
    <property type="expression patterns" value="Expressed in molar tooth and 193 other cell types or tissues"/>
</dbReference>
<dbReference type="ExpressionAtlas" id="Q68FD9">
    <property type="expression patterns" value="baseline and differential"/>
</dbReference>
<dbReference type="GO" id="GO:0016020">
    <property type="term" value="C:membrane"/>
    <property type="evidence" value="ECO:0007669"/>
    <property type="project" value="UniProtKB-SubCell"/>
</dbReference>
<dbReference type="GO" id="GO:0032391">
    <property type="term" value="C:photoreceptor connecting cilium"/>
    <property type="evidence" value="ECO:0000314"/>
    <property type="project" value="UniProtKB"/>
</dbReference>
<dbReference type="InterPro" id="IPR024606">
    <property type="entry name" value="KIAA1549"/>
</dbReference>
<dbReference type="PANTHER" id="PTHR21590">
    <property type="entry name" value="SEA DOMAIN-CONTAINING PROTEIN"/>
    <property type="match status" value="1"/>
</dbReference>
<dbReference type="PANTHER" id="PTHR21590:SF4">
    <property type="entry name" value="UPF0606 PROTEIN KIAA1549"/>
    <property type="match status" value="1"/>
</dbReference>
<dbReference type="Pfam" id="PF12877">
    <property type="entry name" value="KIAA1549"/>
    <property type="match status" value="1"/>
</dbReference>
<reference key="1">
    <citation type="journal article" date="2009" name="PLoS Biol.">
        <title>Lineage-specific biology revealed by a finished genome assembly of the mouse.</title>
        <authorList>
            <person name="Church D.M."/>
            <person name="Goodstadt L."/>
            <person name="Hillier L.W."/>
            <person name="Zody M.C."/>
            <person name="Goldstein S."/>
            <person name="She X."/>
            <person name="Bult C.J."/>
            <person name="Agarwala R."/>
            <person name="Cherry J.L."/>
            <person name="DiCuccio M."/>
            <person name="Hlavina W."/>
            <person name="Kapustin Y."/>
            <person name="Meric P."/>
            <person name="Maglott D."/>
            <person name="Birtle Z."/>
            <person name="Marques A.C."/>
            <person name="Graves T."/>
            <person name="Zhou S."/>
            <person name="Teague B."/>
            <person name="Potamousis K."/>
            <person name="Churas C."/>
            <person name="Place M."/>
            <person name="Herschleb J."/>
            <person name="Runnheim R."/>
            <person name="Forrest D."/>
            <person name="Amos-Landgraf J."/>
            <person name="Schwartz D.C."/>
            <person name="Cheng Z."/>
            <person name="Lindblad-Toh K."/>
            <person name="Eichler E.E."/>
            <person name="Ponting C.P."/>
        </authorList>
    </citation>
    <scope>NUCLEOTIDE SEQUENCE [LARGE SCALE GENOMIC DNA]</scope>
    <source>
        <strain>C57BL/6J</strain>
    </source>
</reference>
<reference key="2">
    <citation type="journal article" date="2004" name="Genome Res.">
        <title>The status, quality, and expansion of the NIH full-length cDNA project: the Mammalian Gene Collection (MGC).</title>
        <authorList>
            <consortium name="The MGC Project Team"/>
        </authorList>
    </citation>
    <scope>NUCLEOTIDE SEQUENCE [LARGE SCALE MRNA] OF 214-1940</scope>
    <source>
        <strain>C57BL/6J</strain>
        <tissue>Brain</tissue>
    </source>
</reference>
<reference key="3">
    <citation type="journal article" date="2003" name="DNA Res.">
        <title>Prediction of the coding sequences of mouse homologues of KIAA gene: III. The complete nucleotide sequences of 500 mouse KIAA-homologous cDNAs identified by screening of terminal sequences of cDNA clones randomly sampled from size-fractionated libraries.</title>
        <authorList>
            <person name="Okazaki N."/>
            <person name="Kikuno R."/>
            <person name="Ohara R."/>
            <person name="Inamoto S."/>
            <person name="Koseki H."/>
            <person name="Hiraoka S."/>
            <person name="Saga Y."/>
            <person name="Nagase T."/>
            <person name="Ohara O."/>
            <person name="Koga H."/>
        </authorList>
    </citation>
    <scope>NUCLEOTIDE SEQUENCE [LARGE SCALE MRNA] OF 938-1753</scope>
    <source>
        <tissue>Embryonic tail</tissue>
    </source>
</reference>
<reference key="4">
    <citation type="journal article" date="2006" name="Mol. Cell. Proteomics">
        <title>Comprehensive identification of phosphorylation sites in postsynaptic density preparations.</title>
        <authorList>
            <person name="Trinidad J.C."/>
            <person name="Specht C.G."/>
            <person name="Thalhammer A."/>
            <person name="Schoepfer R."/>
            <person name="Burlingame A.L."/>
        </authorList>
    </citation>
    <scope>IDENTIFICATION BY MASS SPECTROMETRY [LARGE SCALE ANALYSIS]</scope>
    <source>
        <tissue>Brain</tissue>
    </source>
</reference>
<reference key="5">
    <citation type="journal article" date="2010" name="Cell">
        <title>A tissue-specific atlas of mouse protein phosphorylation and expression.</title>
        <authorList>
            <person name="Huttlin E.L."/>
            <person name="Jedrychowski M.P."/>
            <person name="Elias J.E."/>
            <person name="Goswami T."/>
            <person name="Rad R."/>
            <person name="Beausoleil S.A."/>
            <person name="Villen J."/>
            <person name="Haas W."/>
            <person name="Sowa M.E."/>
            <person name="Gygi S.P."/>
        </authorList>
    </citation>
    <scope>PHOSPHORYLATION [LARGE SCALE ANALYSIS] AT SER-1377; SER-1384; SER-1543; SER-1544; THR-1611 AND SER-1613</scope>
    <scope>IDENTIFICATION BY MASS SPECTROMETRY [LARGE SCALE ANALYSIS]</scope>
    <source>
        <tissue>Brain</tissue>
    </source>
</reference>
<reference key="6">
    <citation type="journal article" date="2018" name="J. Med. Genet.">
        <title>Homozygous variants in KIAA1549, encoding a ciliary protein, are associated with autosomal recessive retinitis pigmentosa.</title>
        <authorList>
            <person name="de Bruijn S.E."/>
            <person name="Verbakel S.K."/>
            <person name="de Vrieze E."/>
            <person name="Kremer H."/>
            <person name="Cremers F.P.M."/>
            <person name="Hoyng C.B."/>
            <person name="van den Born L.I."/>
            <person name="Roosing S."/>
        </authorList>
    </citation>
    <scope>SUBCELLULAR LOCATION</scope>
    <scope>TISSUE SPECIFICITY</scope>
</reference>
<sequence>MEREPRARVALVPERCGRGPSSRHRRPGLLLPGLWLLLLAGPASCAPDDLSLAQHSHPVRPSDFLPERSILHSAAQVTLSETVPRSQPSISALVLSSPSATAFDTAFLSQRQQTQSTAEPSFFEANYGSVTSNEVALDDEEMDNFLPDAHWTSSRGVSPMRYITPSPPEPPQEMLEPGTTPSLPTISLPDEVLSGCQNTVQQATVYVEPSTYFGTSWSAFLTSEGIIPTPSRNSVLHPIEIHSQLSSKALPETVASVTEGAENLLFSSRISVSQPSGNGMTQQPSVPLWEVSQPLVGVLATSSDRYPNETTAWIEHPEEAIALRAHPGITTSPTDPTFSSQPSALFSTPLSSVSFATQLPGVSEDSFLSSEARGALESWHSSPVPSFTDHPYVLSPESSLRPHTGCVSCVVSSFQQELARSLTEKDMGSGDRLETLSTASVEASHVSPLSSVGTDLSELEEPQEFNTLFPSRPVFSFSSRPVGLWKASMDVSPEVDVSGIAITQVYPSHGRLSTPSSLDSTFGFSVTSDLVMSSSMIHLLSSVIPSTHFDSSFSLTANQNSPSFPAGKPSLLTSPSLVPSAQSSAFSHGAPTSSLELQSGSRLDFTSGFYSTPPLDFSTPAPSRSDELAFPSLMSSDPSTFFSQTFSTMAETFSLSNSMNLQSPQLSVLNPTSLEPSQPQSSADLLLNTVTVLPSPPERPPLSSSPSDSLEFTEVSRVSLRESHVHLTSAFSETTSAFEFSPIPHESTISTLVPSSSEPSLGIYAAGTHLTSLPTTVFHLTPILTESSPFSTLTPSDGSVRVTDHHTPVLPTPSSVIPSSTESISDPYLSASSSLVSEVSPSPPPTKPVMGSSLTSTDFPPSTSPELSTSLELSMPSASTAPGDTVDSALNSEPMSQNPQGNSVPPPQPSLGPATTSTLEATVGTPALATAKPPYVCDITVPDVYLITTVLARRAVQEYIITSIKEVLRIHFNRAVELKVYELFTDFTFLVTSGPFVYTAISVINVLINSKLVRGQTPLILSVKPSFLVPDPRFQVQTVLQFVPPSVDTGFCNFTQSIEKGLVTALFEVRKHQGTYNLTVQIVNVTIASSRVAPRRGPVNIIFAVKGSQGFLNGSEVSDLLRNLTVVEFSFYLGYPVLQIAEPFQYPQLNLSQLLKSSWVRTVLLGVVEKQLHNEVFPAEMERKLAQLLSEVPTRRRVWRRATVAAGNSVVQVVNVSRLEGDDNPVQLIYFVENQDGERLSAVKSSDLINKVDLQRAAIILGYRIQGVIAQPVDRVKRPSPESQSNNLWVVVGVVIPVLVVTVIVVILYWKLCRTDKLDFQPDTVANIQQRQKLQIPSVKGFDFAKQHLGQHNKDDILIIHEPAPLPGPVKDHTTPSENGDVPSPKSKLPSKNIRLRGRVSPSDADSTVSEESSERDAGEKAPAAAPENKALRAPQSGAPLPSSGNEQHSSASIFEHVDRVSRTSEASRRVPSKIQLIAMQPIPAPPAQHPVLADRVAETNKINKEIQSALRHKSEIEHHRNKIRLRAKRRGHYEFPVVDDLSSGDTKERHRVYRRAQMQIDKILDPAASVPSVFIEPRKSSRMKRSPKPRRKHQVNGCPADAEKDRLITTDSDGTYKRPPGVHNSAYIGCPSDPDLPADVQTPSSTELGRYPGLPFSASQYIPPQPSIEEARQTMHSLLDDAFALVAPSSQPTNAMGAGTGVPASLPVNSTPSREERRATQWGSFYSPAQTANNPCSRYEDYGMTPPSGPLPSRPSFGPGLLPSSELVPPEPPQPQSSTDAPYAARGIYSEEMPSVARPRPVGGTTGSQIQHLTQVGIASRIGAQPVEIPAGRGSQYGGPGWPVYGEEEAGRREATHMLGHQEYSSSPLFQVPRTSGREPSAPPGNLAHRGLQGPGLGYPTSSTEDLQPGHSSASLIKAIREELLRLSQKQGSVQNFHS</sequence>
<protein>
    <recommendedName>
        <fullName>UPF0606 protein KIAA1549</fullName>
    </recommendedName>
</protein>